<evidence type="ECO:0000255" key="1">
    <source>
        <dbReference type="HAMAP-Rule" id="MF_00201"/>
    </source>
</evidence>
<gene>
    <name evidence="1" type="primary">recO</name>
    <name type="ordered locus">Msil_3841</name>
</gene>
<reference key="1">
    <citation type="journal article" date="2010" name="J. Bacteriol.">
        <title>Complete genome sequence of the aerobic facultative methanotroph Methylocella silvestris BL2.</title>
        <authorList>
            <person name="Chen Y."/>
            <person name="Crombie A."/>
            <person name="Rahman M.T."/>
            <person name="Dedysh S.N."/>
            <person name="Liesack W."/>
            <person name="Stott M.B."/>
            <person name="Alam M."/>
            <person name="Theisen A.R."/>
            <person name="Murrell J.C."/>
            <person name="Dunfield P.F."/>
        </authorList>
    </citation>
    <scope>NUCLEOTIDE SEQUENCE [LARGE SCALE GENOMIC DNA]</scope>
    <source>
        <strain>DSM 15510 / CIP 108128 / LMG 27833 / NCIMB 13906 / BL2</strain>
    </source>
</reference>
<protein>
    <recommendedName>
        <fullName evidence="1">DNA repair protein RecO</fullName>
    </recommendedName>
    <alternativeName>
        <fullName evidence="1">Recombination protein O</fullName>
    </alternativeName>
</protein>
<feature type="chain" id="PRO_1000193397" description="DNA repair protein RecO">
    <location>
        <begin position="1"/>
        <end position="247"/>
    </location>
</feature>
<comment type="function">
    <text evidence="1">Involved in DNA repair and RecF pathway recombination.</text>
</comment>
<comment type="similarity">
    <text evidence="1">Belongs to the RecO family.</text>
</comment>
<sequence>MEWRDEGLIIGVRQYGEASVILEAMTRGHGRHLGLVRGGRSQRMRAVLQPGNSAELVWRARLDEQLGTWAIEPTQLRAATLMASAEALHAVGLICALLRLIAERDPHPDLYETAVLIAGHIGDERLAPLLVRLEIEILRETGFGLDLSRCAATGAREDLAYVSPKSGRAVSLAAGAPYRERLLPLPPFLRDEAPGGEPTPQDVLDGFGLTGFFLKRDVFTPRGQGMPEARRAYLAEFSKRQERSATE</sequence>
<accession>B8EMP4</accession>
<dbReference type="EMBL" id="CP001280">
    <property type="protein sequence ID" value="ACK52723.1"/>
    <property type="molecule type" value="Genomic_DNA"/>
</dbReference>
<dbReference type="RefSeq" id="WP_012592791.1">
    <property type="nucleotide sequence ID" value="NC_011666.1"/>
</dbReference>
<dbReference type="SMR" id="B8EMP4"/>
<dbReference type="STRING" id="395965.Msil_3841"/>
<dbReference type="KEGG" id="msl:Msil_3841"/>
<dbReference type="eggNOG" id="COG1381">
    <property type="taxonomic scope" value="Bacteria"/>
</dbReference>
<dbReference type="HOGENOM" id="CLU_086029_0_0_5"/>
<dbReference type="OrthoDB" id="9804792at2"/>
<dbReference type="Proteomes" id="UP000002257">
    <property type="component" value="Chromosome"/>
</dbReference>
<dbReference type="GO" id="GO:0043590">
    <property type="term" value="C:bacterial nucleoid"/>
    <property type="evidence" value="ECO:0007669"/>
    <property type="project" value="TreeGrafter"/>
</dbReference>
<dbReference type="GO" id="GO:0006310">
    <property type="term" value="P:DNA recombination"/>
    <property type="evidence" value="ECO:0007669"/>
    <property type="project" value="UniProtKB-UniRule"/>
</dbReference>
<dbReference type="GO" id="GO:0006302">
    <property type="term" value="P:double-strand break repair"/>
    <property type="evidence" value="ECO:0007669"/>
    <property type="project" value="TreeGrafter"/>
</dbReference>
<dbReference type="Gene3D" id="2.40.50.140">
    <property type="entry name" value="Nucleic acid-binding proteins"/>
    <property type="match status" value="1"/>
</dbReference>
<dbReference type="Gene3D" id="1.20.1440.120">
    <property type="entry name" value="Recombination protein O, C-terminal domain"/>
    <property type="match status" value="1"/>
</dbReference>
<dbReference type="HAMAP" id="MF_00201">
    <property type="entry name" value="RecO"/>
    <property type="match status" value="1"/>
</dbReference>
<dbReference type="InterPro" id="IPR037278">
    <property type="entry name" value="ARFGAP/RecO"/>
</dbReference>
<dbReference type="InterPro" id="IPR022572">
    <property type="entry name" value="DNA_rep/recomb_RecO_N"/>
</dbReference>
<dbReference type="InterPro" id="IPR012340">
    <property type="entry name" value="NA-bd_OB-fold"/>
</dbReference>
<dbReference type="InterPro" id="IPR003717">
    <property type="entry name" value="RecO"/>
</dbReference>
<dbReference type="InterPro" id="IPR042242">
    <property type="entry name" value="RecO_C"/>
</dbReference>
<dbReference type="NCBIfam" id="TIGR00613">
    <property type="entry name" value="reco"/>
    <property type="match status" value="1"/>
</dbReference>
<dbReference type="PANTHER" id="PTHR33991">
    <property type="entry name" value="DNA REPAIR PROTEIN RECO"/>
    <property type="match status" value="1"/>
</dbReference>
<dbReference type="PANTHER" id="PTHR33991:SF1">
    <property type="entry name" value="DNA REPAIR PROTEIN RECO"/>
    <property type="match status" value="1"/>
</dbReference>
<dbReference type="Pfam" id="PF02565">
    <property type="entry name" value="RecO_C"/>
    <property type="match status" value="1"/>
</dbReference>
<dbReference type="Pfam" id="PF11967">
    <property type="entry name" value="RecO_N"/>
    <property type="match status" value="1"/>
</dbReference>
<dbReference type="SUPFAM" id="SSF57863">
    <property type="entry name" value="ArfGap/RecO-like zinc finger"/>
    <property type="match status" value="1"/>
</dbReference>
<dbReference type="SUPFAM" id="SSF50249">
    <property type="entry name" value="Nucleic acid-binding proteins"/>
    <property type="match status" value="1"/>
</dbReference>
<proteinExistence type="inferred from homology"/>
<name>RECO_METSB</name>
<organism>
    <name type="scientific">Methylocella silvestris (strain DSM 15510 / CIP 108128 / LMG 27833 / NCIMB 13906 / BL2)</name>
    <dbReference type="NCBI Taxonomy" id="395965"/>
    <lineage>
        <taxon>Bacteria</taxon>
        <taxon>Pseudomonadati</taxon>
        <taxon>Pseudomonadota</taxon>
        <taxon>Alphaproteobacteria</taxon>
        <taxon>Hyphomicrobiales</taxon>
        <taxon>Beijerinckiaceae</taxon>
        <taxon>Methylocella</taxon>
    </lineage>
</organism>
<keyword id="KW-0227">DNA damage</keyword>
<keyword id="KW-0233">DNA recombination</keyword>
<keyword id="KW-0234">DNA repair</keyword>
<keyword id="KW-1185">Reference proteome</keyword>